<reference key="1">
    <citation type="submission" date="2004-11" db="EMBL/GenBank/DDBJ databases">
        <authorList>
            <consortium name="The German cDNA consortium"/>
        </authorList>
    </citation>
    <scope>NUCLEOTIDE SEQUENCE [LARGE SCALE MRNA]</scope>
    <source>
        <tissue>Brain cortex</tissue>
    </source>
</reference>
<organism>
    <name type="scientific">Pongo abelii</name>
    <name type="common">Sumatran orangutan</name>
    <name type="synonym">Pongo pygmaeus abelii</name>
    <dbReference type="NCBI Taxonomy" id="9601"/>
    <lineage>
        <taxon>Eukaryota</taxon>
        <taxon>Metazoa</taxon>
        <taxon>Chordata</taxon>
        <taxon>Craniata</taxon>
        <taxon>Vertebrata</taxon>
        <taxon>Euteleostomi</taxon>
        <taxon>Mammalia</taxon>
        <taxon>Eutheria</taxon>
        <taxon>Euarchontoglires</taxon>
        <taxon>Primates</taxon>
        <taxon>Haplorrhini</taxon>
        <taxon>Catarrhini</taxon>
        <taxon>Hominidae</taxon>
        <taxon>Pongo</taxon>
    </lineage>
</organism>
<protein>
    <recommendedName>
        <fullName>Serine/threonine-protein kinase TAO3</fullName>
        <ecNumber>2.7.11.1</ecNumber>
    </recommendedName>
    <alternativeName>
        <fullName>Thousand and one amino acid protein 3</fullName>
    </alternativeName>
</protein>
<proteinExistence type="evidence at transcript level"/>
<evidence type="ECO:0000250" key="1">
    <source>
        <dbReference type="UniProtKB" id="Q53UA7"/>
    </source>
</evidence>
<evidence type="ECO:0000250" key="2">
    <source>
        <dbReference type="UniProtKB" id="Q8BYC6"/>
    </source>
</evidence>
<evidence type="ECO:0000250" key="3">
    <source>
        <dbReference type="UniProtKB" id="Q9H2K8"/>
    </source>
</evidence>
<evidence type="ECO:0000255" key="4"/>
<evidence type="ECO:0000255" key="5">
    <source>
        <dbReference type="PROSITE-ProRule" id="PRU00159"/>
    </source>
</evidence>
<evidence type="ECO:0000255" key="6">
    <source>
        <dbReference type="PROSITE-ProRule" id="PRU10027"/>
    </source>
</evidence>
<evidence type="ECO:0000256" key="7">
    <source>
        <dbReference type="SAM" id="MobiDB-lite"/>
    </source>
</evidence>
<evidence type="ECO:0000305" key="8"/>
<sequence length="898" mass="105361">MRKGVLKDPEIADLFYKDDPEELFIGLHEIGHGSFGAVYFATNAHTNEVVAIKKMSYSGKQTHEKWQDILKEVKFLRQLKHPNTIEYKGCYLKEHTAWLVMEYCLGSASDLLEVHKKPLQEVEIAAITHGALHGLAYLHSHALIHRDIKAGNILLTEPGQVKLADFGSASVASPANSFVGTPYWMAPEVILAMDEGQYDGKVDVWSLGITCIELAERKPALFNMNAMSALYHIAQNDSPTLQSNEWTDSFRRFVDYCLQKIPQERPTSAELLRHDFVRRDRPLRVLIDLIQRTKDAVRELDNLQYRKMKKILFQETRNGPLNESQEDEEDSEHGTSLNREMDSLGSNHSIPSMSVSTGSQSSSVNSMQEVMDESSSELVMMHDDESTINSSSSVVHKKDHVFIRDEAGHGDPRPEPRPTQSVQSQALHYRNRERFATIKSASLVTRQIHEHEQENELREQMSGYKRMRRQHQKQLIALENKLKAEMDEHRLKLQKEVETHANNSSIELEKLAKKQVAIIEKEAKVAAADEKKFQQQILAQQKKDLTTFLESQKKQYKICKEKIKEEMNEDHSTPKKEKQERISKHKENLQHTQAEEEAHLLTQQRLYYDKNCRFFKRKIMIKRHEVEQQNIREELNKKRTQKEMEHAMLIRHDESTRELEYRQLHTLQKLRMDLIRLQHQTELENQLEYNKRRERELHRKHVMELRQQPKNLKAMEMQIKKQFQDTCKVQTKQYKALKNHQLEVTPKNEHKTILKTLKDEQTRKLAILAEQYEQSINEMMASQALRLDEAQEAECQALRLQLQQEMELLNAYQSKIKMQTEAQHERELQKLEQRVSLRRAHLEQKIEEELAALQKERSERIKNLLERQEREIETFDMESLRMGFGNLVTLDFPKEDYR</sequence>
<comment type="function">
    <text evidence="2 3">Serine/threonine-protein kinase that acts as a regulator of the p38/MAPK14 stress-activated MAPK cascade and of the MAPK8/JNK cascade. In response to DNA damage, involved in the G2/M transition DNA damage checkpoint by activating the p38/MAPK14 stress-activated MAPK cascade, probably by mediating phosphorylation of upstream MAP2K3 and MAP2K6 kinases. Inhibits basal activity of the MAPK8/JNK cascade and diminishes its activation in response to epidermal growth factor (EGF). Positively regulates canonical T cell receptor (TCR) signaling by preventing early PTPN6/SHP1-mediated inactivation of LCK, ensuring sustained TCR signaling that is required for optimal activation and differentiation of T cells. Phosphorylates PTPN6/SHP1 on 'Thr-394', leading to its polyubiquitination and subsequent proteasomal degradation. Required for cell surface expression of metalloprotease ADAM10 on type 1 transitional B cells which is necessary for their NOTCH-mediated development into marginal zone B cells. Also required for the NOTCH-mediated terminal differentiation of splenic conventional type 2 dendritic cells. Positively regulates osteoblast differentiation by acting as an upstream activator of the JNK pathway. Promotes JNK signaling in hepatocytes and positively regulates hepatocyte lipid storage by inhibiting beta-oxidation and triacylglycerol secretion while enhancing lipid synthesis. Restricts age-associated inflammation by negatively regulating differentiation of macrophages and their production of pro-inflammatory cytokines. Plays a role in negatively regulating the abundance of regulatory T cells in white adipose tissue.</text>
</comment>
<comment type="catalytic activity">
    <reaction>
        <text>L-seryl-[protein] + ATP = O-phospho-L-seryl-[protein] + ADP + H(+)</text>
        <dbReference type="Rhea" id="RHEA:17989"/>
        <dbReference type="Rhea" id="RHEA-COMP:9863"/>
        <dbReference type="Rhea" id="RHEA-COMP:11604"/>
        <dbReference type="ChEBI" id="CHEBI:15378"/>
        <dbReference type="ChEBI" id="CHEBI:29999"/>
        <dbReference type="ChEBI" id="CHEBI:30616"/>
        <dbReference type="ChEBI" id="CHEBI:83421"/>
        <dbReference type="ChEBI" id="CHEBI:456216"/>
        <dbReference type="EC" id="2.7.11.1"/>
    </reaction>
</comment>
<comment type="catalytic activity">
    <reaction>
        <text>L-threonyl-[protein] + ATP = O-phospho-L-threonyl-[protein] + ADP + H(+)</text>
        <dbReference type="Rhea" id="RHEA:46608"/>
        <dbReference type="Rhea" id="RHEA-COMP:11060"/>
        <dbReference type="Rhea" id="RHEA-COMP:11605"/>
        <dbReference type="ChEBI" id="CHEBI:15378"/>
        <dbReference type="ChEBI" id="CHEBI:30013"/>
        <dbReference type="ChEBI" id="CHEBI:30616"/>
        <dbReference type="ChEBI" id="CHEBI:61977"/>
        <dbReference type="ChEBI" id="CHEBI:456216"/>
        <dbReference type="EC" id="2.7.11.1"/>
    </reaction>
</comment>
<comment type="subunit">
    <text evidence="3">Self-associates. Interacts with ERN1 and TRAF2. Interaction with TRAF2 is facilitated under ER stress conditions, such as treatment with tunicamycin, and may promote TRAF2 phosphorylation. Interacts (via N-terminus) with STK25; the interaction promotes STK25 abundance at the level of protein expression and/or stability.</text>
</comment>
<comment type="subcellular location">
    <subcellularLocation>
        <location evidence="3">Cytoplasm</location>
    </subcellularLocation>
    <subcellularLocation>
        <location evidence="3">Cell membrane</location>
        <topology evidence="3">Peripheral membrane protein</topology>
    </subcellularLocation>
    <subcellularLocation>
        <location evidence="3">Membrane raft</location>
    </subcellularLocation>
    <subcellularLocation>
        <location evidence="3">Lipid droplet</location>
    </subcellularLocation>
    <text evidence="3">Located primarily outside cell membrane rafts and remains outside upon canonical TCR ligation. A small pool is detectable in cell membrane rafts in resting conditions but relocates outside the rafts upon TCR signaling. Localizes to lipid droplets in hepatocytes.</text>
</comment>
<comment type="PTM">
    <text evidence="3">Autophosphorylated. Phosphorylation at Ser-324 by ATM following DNA damage is required for activation of the p38/MAPK14 stress-activated MAPK cascade. Phosphorylated at Ser-324 and on Tyr residues during T cell activation. Phosphorylated by LRRK2.</text>
</comment>
<comment type="similarity">
    <text evidence="8">Belongs to the protein kinase superfamily. STE Ser/Thr protein kinase family. STE20 subfamily.</text>
</comment>
<gene>
    <name type="primary">TAOK3</name>
</gene>
<keyword id="KW-0007">Acetylation</keyword>
<keyword id="KW-0067">ATP-binding</keyword>
<keyword id="KW-1003">Cell membrane</keyword>
<keyword id="KW-0175">Coiled coil</keyword>
<keyword id="KW-0963">Cytoplasm</keyword>
<keyword id="KW-0227">DNA damage</keyword>
<keyword id="KW-0234">DNA repair</keyword>
<keyword id="KW-0418">Kinase</keyword>
<keyword id="KW-0551">Lipid droplet</keyword>
<keyword id="KW-0472">Membrane</keyword>
<keyword id="KW-0547">Nucleotide-binding</keyword>
<keyword id="KW-0597">Phosphoprotein</keyword>
<keyword id="KW-1185">Reference proteome</keyword>
<keyword id="KW-0723">Serine/threonine-protein kinase</keyword>
<keyword id="KW-0808">Transferase</keyword>
<name>TAOK3_PONAB</name>
<accession>Q5R4F3</accession>
<dbReference type="EC" id="2.7.11.1"/>
<dbReference type="EMBL" id="CR861296">
    <property type="protein sequence ID" value="CAH93363.1"/>
    <property type="molecule type" value="mRNA"/>
</dbReference>
<dbReference type="RefSeq" id="NP_001126981.1">
    <property type="nucleotide sequence ID" value="NM_001133509.2"/>
</dbReference>
<dbReference type="SMR" id="Q5R4F3"/>
<dbReference type="FunCoup" id="Q5R4F3">
    <property type="interactions" value="2386"/>
</dbReference>
<dbReference type="STRING" id="9601.ENSPPYP00000024760"/>
<dbReference type="GeneID" id="100174000"/>
<dbReference type="KEGG" id="pon:100174000"/>
<dbReference type="CTD" id="51347"/>
<dbReference type="eggNOG" id="KOG0577">
    <property type="taxonomic scope" value="Eukaryota"/>
</dbReference>
<dbReference type="InParanoid" id="Q5R4F3"/>
<dbReference type="OrthoDB" id="10016527at2759"/>
<dbReference type="Proteomes" id="UP000001595">
    <property type="component" value="Unplaced"/>
</dbReference>
<dbReference type="GO" id="GO:0005737">
    <property type="term" value="C:cytoplasm"/>
    <property type="evidence" value="ECO:0007669"/>
    <property type="project" value="UniProtKB-SubCell"/>
</dbReference>
<dbReference type="GO" id="GO:0005524">
    <property type="term" value="F:ATP binding"/>
    <property type="evidence" value="ECO:0007669"/>
    <property type="project" value="UniProtKB-KW"/>
</dbReference>
<dbReference type="GO" id="GO:0106310">
    <property type="term" value="F:protein serine kinase activity"/>
    <property type="evidence" value="ECO:0007669"/>
    <property type="project" value="RHEA"/>
</dbReference>
<dbReference type="GO" id="GO:0004674">
    <property type="term" value="F:protein serine/threonine kinase activity"/>
    <property type="evidence" value="ECO:0007669"/>
    <property type="project" value="UniProtKB-KW"/>
</dbReference>
<dbReference type="GO" id="GO:0006974">
    <property type="term" value="P:DNA damage response"/>
    <property type="evidence" value="ECO:0000250"/>
    <property type="project" value="UniProtKB"/>
</dbReference>
<dbReference type="GO" id="GO:0006281">
    <property type="term" value="P:DNA repair"/>
    <property type="evidence" value="ECO:0007669"/>
    <property type="project" value="UniProtKB-KW"/>
</dbReference>
<dbReference type="GO" id="GO:0007095">
    <property type="term" value="P:mitotic G2 DNA damage checkpoint signaling"/>
    <property type="evidence" value="ECO:0000250"/>
    <property type="project" value="UniProtKB"/>
</dbReference>
<dbReference type="GO" id="GO:0032874">
    <property type="term" value="P:positive regulation of stress-activated MAPK cascade"/>
    <property type="evidence" value="ECO:0000250"/>
    <property type="project" value="UniProtKB"/>
</dbReference>
<dbReference type="GO" id="GO:0051493">
    <property type="term" value="P:regulation of cytoskeleton organization"/>
    <property type="evidence" value="ECO:0007669"/>
    <property type="project" value="TreeGrafter"/>
</dbReference>
<dbReference type="CDD" id="cd06633">
    <property type="entry name" value="STKc_TAO3"/>
    <property type="match status" value="1"/>
</dbReference>
<dbReference type="FunFam" id="1.10.510.10:FF:000030">
    <property type="entry name" value="Serine/threonine-protein kinase TAO2, putative"/>
    <property type="match status" value="1"/>
</dbReference>
<dbReference type="FunFam" id="3.30.200.20:FF:000029">
    <property type="entry name" value="Serine/threonine-protein kinase TAO2, putative"/>
    <property type="match status" value="1"/>
</dbReference>
<dbReference type="Gene3D" id="3.30.200.20">
    <property type="entry name" value="Phosphorylase Kinase, domain 1"/>
    <property type="match status" value="1"/>
</dbReference>
<dbReference type="Gene3D" id="1.10.510.10">
    <property type="entry name" value="Transferase(Phosphotransferase) domain 1"/>
    <property type="match status" value="1"/>
</dbReference>
<dbReference type="InterPro" id="IPR011009">
    <property type="entry name" value="Kinase-like_dom_sf"/>
</dbReference>
<dbReference type="InterPro" id="IPR000719">
    <property type="entry name" value="Prot_kinase_dom"/>
</dbReference>
<dbReference type="InterPro" id="IPR017441">
    <property type="entry name" value="Protein_kinase_ATP_BS"/>
</dbReference>
<dbReference type="InterPro" id="IPR008271">
    <property type="entry name" value="Ser/Thr_kinase_AS"/>
</dbReference>
<dbReference type="InterPro" id="IPR051234">
    <property type="entry name" value="TAO_STE20_kinase"/>
</dbReference>
<dbReference type="PANTHER" id="PTHR47167">
    <property type="entry name" value="SERINE/THREONINE-PROTEIN KINASE TAO1-LIKE PROTEIN"/>
    <property type="match status" value="1"/>
</dbReference>
<dbReference type="PANTHER" id="PTHR47167:SF10">
    <property type="entry name" value="SERINE_THREONINE-PROTEIN KINASE TAO3"/>
    <property type="match status" value="1"/>
</dbReference>
<dbReference type="Pfam" id="PF00069">
    <property type="entry name" value="Pkinase"/>
    <property type="match status" value="1"/>
</dbReference>
<dbReference type="SMART" id="SM00220">
    <property type="entry name" value="S_TKc"/>
    <property type="match status" value="1"/>
</dbReference>
<dbReference type="SUPFAM" id="SSF56112">
    <property type="entry name" value="Protein kinase-like (PK-like)"/>
    <property type="match status" value="1"/>
</dbReference>
<dbReference type="PROSITE" id="PS00107">
    <property type="entry name" value="PROTEIN_KINASE_ATP"/>
    <property type="match status" value="1"/>
</dbReference>
<dbReference type="PROSITE" id="PS50011">
    <property type="entry name" value="PROTEIN_KINASE_DOM"/>
    <property type="match status" value="1"/>
</dbReference>
<dbReference type="PROSITE" id="PS00108">
    <property type="entry name" value="PROTEIN_KINASE_ST"/>
    <property type="match status" value="1"/>
</dbReference>
<feature type="chain" id="PRO_0000086739" description="Serine/threonine-protein kinase TAO3">
    <location>
        <begin position="1"/>
        <end position="898"/>
    </location>
</feature>
<feature type="domain" description="Protein kinase" evidence="5">
    <location>
        <begin position="24"/>
        <end position="277"/>
    </location>
</feature>
<feature type="region of interest" description="Disordered" evidence="7">
    <location>
        <begin position="316"/>
        <end position="362"/>
    </location>
</feature>
<feature type="region of interest" description="Disordered" evidence="7">
    <location>
        <begin position="405"/>
        <end position="425"/>
    </location>
</feature>
<feature type="region of interest" description="Disordered" evidence="7">
    <location>
        <begin position="565"/>
        <end position="596"/>
    </location>
</feature>
<feature type="coiled-coil region" evidence="4">
    <location>
        <begin position="452"/>
        <end position="502"/>
    </location>
</feature>
<feature type="coiled-coil region" evidence="4">
    <location>
        <begin position="548"/>
        <end position="649"/>
    </location>
</feature>
<feature type="coiled-coil region" evidence="4">
    <location>
        <begin position="754"/>
        <end position="879"/>
    </location>
</feature>
<feature type="compositionally biased region" description="Polar residues" evidence="7">
    <location>
        <begin position="334"/>
        <end position="351"/>
    </location>
</feature>
<feature type="compositionally biased region" description="Low complexity" evidence="7">
    <location>
        <begin position="352"/>
        <end position="362"/>
    </location>
</feature>
<feature type="compositionally biased region" description="Basic and acidic residues" evidence="7">
    <location>
        <begin position="405"/>
        <end position="416"/>
    </location>
</feature>
<feature type="active site" description="Proton acceptor" evidence="5 6">
    <location>
        <position position="147"/>
    </location>
</feature>
<feature type="binding site" evidence="5">
    <location>
        <begin position="30"/>
        <end position="38"/>
    </location>
    <ligand>
        <name>ATP</name>
        <dbReference type="ChEBI" id="CHEBI:30616"/>
    </ligand>
</feature>
<feature type="binding site" evidence="5">
    <location>
        <position position="53"/>
    </location>
    <ligand>
        <name>ATP</name>
        <dbReference type="ChEBI" id="CHEBI:30616"/>
    </ligand>
</feature>
<feature type="modified residue" description="Phosphoserine; by ATM" evidence="3">
    <location>
        <position position="324"/>
    </location>
</feature>
<feature type="modified residue" description="Phosphoserine" evidence="3">
    <location>
        <position position="331"/>
    </location>
</feature>
<feature type="modified residue" description="Phosphoserine" evidence="1">
    <location>
        <position position="343"/>
    </location>
</feature>
<feature type="modified residue" description="Phosphoserine" evidence="2">
    <location>
        <position position="346"/>
    </location>
</feature>
<feature type="modified residue" description="Phosphoserine" evidence="2">
    <location>
        <position position="349"/>
    </location>
</feature>
<feature type="modified residue" description="Phosphothreonine" evidence="2">
    <location>
        <position position="357"/>
    </location>
</feature>
<feature type="modified residue" description="Phosphoserine" evidence="2">
    <location>
        <position position="359"/>
    </location>
</feature>
<feature type="modified residue" description="Phosphoserine" evidence="3">
    <location>
        <position position="442"/>
    </location>
</feature>
<feature type="modified residue" description="N6-acetyllysine" evidence="2">
    <location>
        <position position="830"/>
    </location>
</feature>